<organism>
    <name type="scientific">Burkholderia thailandensis (strain ATCC 700388 / DSM 13276 / CCUG 48851 / CIP 106301 / E264)</name>
    <dbReference type="NCBI Taxonomy" id="271848"/>
    <lineage>
        <taxon>Bacteria</taxon>
        <taxon>Pseudomonadati</taxon>
        <taxon>Pseudomonadota</taxon>
        <taxon>Betaproteobacteria</taxon>
        <taxon>Burkholderiales</taxon>
        <taxon>Burkholderiaceae</taxon>
        <taxon>Burkholderia</taxon>
        <taxon>pseudomallei group</taxon>
    </lineage>
</organism>
<sequence length="508" mass="57233">MTEPIQPQAAVAADENQIVAERRDKLRALRDQGIAYPNDFQPTHHAADLQTAYADADKEALEAKSLEVAIAGRMMLKRVMGKASFATVQDGSGQIQFFVTPADVGAETYDAFKKWDLGDIVAARGVLFRTNKGELSVKCTQLRLLAKALRPLPDKFHGLADQETRYRQRYVDLIVTPETRTTFRARTKAIASIRKFMGDADFMEVETPMLHPIPGGAAAKPFVTHHNALDMEMFLRIAPELYLKRLIVGGFERVFEINRNFRNEGVSPRHNPEFTMMEFYAAYTDYRWLMDFTERLIRQAAVDALGTATIQYQGRELDLAQPFHRLTITQAIQKYAPSYTDGQLSDDAFLRSELKRLGVDVTQPAFLNAGIGALQLALFEETAEAQLWEPTFIIDYPIEVSPLARESDTVAGITERFELFITGREIANGFSELNDPEDQAARFKKQVEQKDAGDEEAMFFDADYIRALEYGMPPTGGCGIGIDRLVMLLTDSPTIRDVLLFPHLRRED</sequence>
<keyword id="KW-0002">3D-structure</keyword>
<keyword id="KW-0030">Aminoacyl-tRNA synthetase</keyword>
<keyword id="KW-0067">ATP-binding</keyword>
<keyword id="KW-0963">Cytoplasm</keyword>
<keyword id="KW-0436">Ligase</keyword>
<keyword id="KW-0460">Magnesium</keyword>
<keyword id="KW-0479">Metal-binding</keyword>
<keyword id="KW-0547">Nucleotide-binding</keyword>
<keyword id="KW-0648">Protein biosynthesis</keyword>
<protein>
    <recommendedName>
        <fullName evidence="1">Lysine--tRNA ligase</fullName>
        <ecNumber evidence="1">6.1.1.6</ecNumber>
    </recommendedName>
    <alternativeName>
        <fullName evidence="1">Lysyl-tRNA synthetase</fullName>
        <shortName evidence="1">LysRS</shortName>
    </alternativeName>
</protein>
<reference key="1">
    <citation type="journal article" date="2005" name="BMC Genomics">
        <title>Bacterial genome adaptation to niches: divergence of the potential virulence genes in three Burkholderia species of different survival strategies.</title>
        <authorList>
            <person name="Kim H.S."/>
            <person name="Schell M.A."/>
            <person name="Yu Y."/>
            <person name="Ulrich R.L."/>
            <person name="Sarria S.H."/>
            <person name="Nierman W.C."/>
            <person name="DeShazer D."/>
        </authorList>
    </citation>
    <scope>NUCLEOTIDE SEQUENCE [LARGE SCALE GENOMIC DNA]</scope>
    <source>
        <strain>ATCC 700388 / DSM 13276 / CCUG 48851 / CIP 106301 / E264</strain>
    </source>
</reference>
<comment type="catalytic activity">
    <reaction evidence="1">
        <text>tRNA(Lys) + L-lysine + ATP = L-lysyl-tRNA(Lys) + AMP + diphosphate</text>
        <dbReference type="Rhea" id="RHEA:20792"/>
        <dbReference type="Rhea" id="RHEA-COMP:9696"/>
        <dbReference type="Rhea" id="RHEA-COMP:9697"/>
        <dbReference type="ChEBI" id="CHEBI:30616"/>
        <dbReference type="ChEBI" id="CHEBI:32551"/>
        <dbReference type="ChEBI" id="CHEBI:33019"/>
        <dbReference type="ChEBI" id="CHEBI:78442"/>
        <dbReference type="ChEBI" id="CHEBI:78529"/>
        <dbReference type="ChEBI" id="CHEBI:456215"/>
        <dbReference type="EC" id="6.1.1.6"/>
    </reaction>
</comment>
<comment type="cofactor">
    <cofactor evidence="1">
        <name>Mg(2+)</name>
        <dbReference type="ChEBI" id="CHEBI:18420"/>
    </cofactor>
    <text evidence="1">Binds 3 Mg(2+) ions per subunit.</text>
</comment>
<comment type="subunit">
    <text evidence="1">Homodimer.</text>
</comment>
<comment type="subcellular location">
    <subcellularLocation>
        <location evidence="1">Cytoplasm</location>
    </subcellularLocation>
</comment>
<comment type="similarity">
    <text evidence="1">Belongs to the class-II aminoacyl-tRNA synthetase family.</text>
</comment>
<evidence type="ECO:0000255" key="1">
    <source>
        <dbReference type="HAMAP-Rule" id="MF_00252"/>
    </source>
</evidence>
<evidence type="ECO:0007829" key="2">
    <source>
        <dbReference type="PDB" id="4EX5"/>
    </source>
</evidence>
<accession>Q2SXD6</accession>
<gene>
    <name evidence="1" type="primary">lysS</name>
    <name type="ordered locus">BTH_I1883</name>
</gene>
<feature type="chain" id="PRO_1000012859" description="Lysine--tRNA ligase">
    <location>
        <begin position="1"/>
        <end position="508"/>
    </location>
</feature>
<feature type="binding site" evidence="1">
    <location>
        <position position="418"/>
    </location>
    <ligand>
        <name>Mg(2+)</name>
        <dbReference type="ChEBI" id="CHEBI:18420"/>
        <label>1</label>
    </ligand>
</feature>
<feature type="binding site" evidence="1">
    <location>
        <position position="425"/>
    </location>
    <ligand>
        <name>Mg(2+)</name>
        <dbReference type="ChEBI" id="CHEBI:18420"/>
        <label>1</label>
    </ligand>
</feature>
<feature type="binding site" evidence="1">
    <location>
        <position position="425"/>
    </location>
    <ligand>
        <name>Mg(2+)</name>
        <dbReference type="ChEBI" id="CHEBI:18420"/>
        <label>2</label>
    </ligand>
</feature>
<feature type="helix" evidence="2">
    <location>
        <begin position="16"/>
        <end position="31"/>
    </location>
</feature>
<feature type="helix" evidence="2">
    <location>
        <begin position="46"/>
        <end position="52"/>
    </location>
</feature>
<feature type="turn" evidence="2">
    <location>
        <begin position="53"/>
        <end position="55"/>
    </location>
</feature>
<feature type="helix" evidence="2">
    <location>
        <begin position="58"/>
        <end position="64"/>
    </location>
</feature>
<feature type="strand" evidence="2">
    <location>
        <begin position="67"/>
        <end position="80"/>
    </location>
</feature>
<feature type="strand" evidence="2">
    <location>
        <begin position="83"/>
        <end position="89"/>
    </location>
</feature>
<feature type="strand" evidence="2">
    <location>
        <begin position="94"/>
        <end position="99"/>
    </location>
</feature>
<feature type="helix" evidence="2">
    <location>
        <begin position="101"/>
        <end position="104"/>
    </location>
</feature>
<feature type="helix" evidence="2">
    <location>
        <begin position="106"/>
        <end position="113"/>
    </location>
</feature>
<feature type="strand" evidence="2">
    <location>
        <begin position="120"/>
        <end position="129"/>
    </location>
</feature>
<feature type="strand" evidence="2">
    <location>
        <begin position="135"/>
        <end position="146"/>
    </location>
</feature>
<feature type="helix" evidence="2">
    <location>
        <begin position="164"/>
        <end position="167"/>
    </location>
</feature>
<feature type="helix" evidence="2">
    <location>
        <begin position="169"/>
        <end position="175"/>
    </location>
</feature>
<feature type="helix" evidence="2">
    <location>
        <begin position="177"/>
        <end position="199"/>
    </location>
</feature>
<feature type="strand" evidence="2">
    <location>
        <begin position="209"/>
        <end position="213"/>
    </location>
</feature>
<feature type="strand" evidence="2">
    <location>
        <begin position="216"/>
        <end position="219"/>
    </location>
</feature>
<feature type="strand" evidence="2">
    <location>
        <begin position="223"/>
        <end position="226"/>
    </location>
</feature>
<feature type="turn" evidence="2">
    <location>
        <begin position="227"/>
        <end position="230"/>
    </location>
</feature>
<feature type="strand" evidence="2">
    <location>
        <begin position="231"/>
        <end position="235"/>
    </location>
</feature>
<feature type="helix" evidence="2">
    <location>
        <begin position="240"/>
        <end position="248"/>
    </location>
</feature>
<feature type="strand" evidence="2">
    <location>
        <begin position="252"/>
        <end position="261"/>
    </location>
</feature>
<feature type="strand" evidence="2">
    <location>
        <begin position="272"/>
        <end position="282"/>
    </location>
</feature>
<feature type="helix" evidence="2">
    <location>
        <begin position="286"/>
        <end position="305"/>
    </location>
</feature>
<feature type="strand" evidence="2">
    <location>
        <begin position="308"/>
        <end position="312"/>
    </location>
</feature>
<feature type="strand" evidence="2">
    <location>
        <begin position="315"/>
        <end position="318"/>
    </location>
</feature>
<feature type="strand" evidence="2">
    <location>
        <begin position="324"/>
        <end position="327"/>
    </location>
</feature>
<feature type="helix" evidence="2">
    <location>
        <begin position="328"/>
        <end position="335"/>
    </location>
</feature>
<feature type="helix" evidence="2">
    <location>
        <begin position="341"/>
        <end position="344"/>
    </location>
</feature>
<feature type="helix" evidence="2">
    <location>
        <begin position="347"/>
        <end position="356"/>
    </location>
</feature>
<feature type="helix" evidence="2">
    <location>
        <begin position="364"/>
        <end position="366"/>
    </location>
</feature>
<feature type="helix" evidence="2">
    <location>
        <begin position="371"/>
        <end position="382"/>
    </location>
</feature>
<feature type="helix" evidence="2">
    <location>
        <begin position="384"/>
        <end position="386"/>
    </location>
</feature>
<feature type="strand" evidence="2">
    <location>
        <begin position="391"/>
        <end position="397"/>
    </location>
</feature>
<feature type="helix" evidence="2">
    <location>
        <begin position="398"/>
        <end position="400"/>
    </location>
</feature>
<feature type="strand" evidence="2">
    <location>
        <begin position="408"/>
        <end position="410"/>
    </location>
</feature>
<feature type="strand" evidence="2">
    <location>
        <begin position="413"/>
        <end position="421"/>
    </location>
</feature>
<feature type="strand" evidence="2">
    <location>
        <begin position="424"/>
        <end position="432"/>
    </location>
</feature>
<feature type="helix" evidence="2">
    <location>
        <begin position="436"/>
        <end position="451"/>
    </location>
</feature>
<feature type="helix" evidence="2">
    <location>
        <begin position="462"/>
        <end position="469"/>
    </location>
</feature>
<feature type="strand" evidence="2">
    <location>
        <begin position="475"/>
        <end position="481"/>
    </location>
</feature>
<feature type="helix" evidence="2">
    <location>
        <begin position="482"/>
        <end position="490"/>
    </location>
</feature>
<feature type="helix" evidence="2">
    <location>
        <begin position="495"/>
        <end position="498"/>
    </location>
</feature>
<name>SYK_BURTA</name>
<dbReference type="EC" id="6.1.1.6" evidence="1"/>
<dbReference type="EMBL" id="CP000086">
    <property type="protein sequence ID" value="ABC37378.1"/>
    <property type="molecule type" value="Genomic_DNA"/>
</dbReference>
<dbReference type="RefSeq" id="WP_009890173.1">
    <property type="nucleotide sequence ID" value="NZ_CP008785.1"/>
</dbReference>
<dbReference type="PDB" id="4EX5">
    <property type="method" value="X-ray"/>
    <property type="resolution" value="2.40 A"/>
    <property type="chains" value="A/B=1-508"/>
</dbReference>
<dbReference type="PDBsum" id="4EX5"/>
<dbReference type="SMR" id="Q2SXD6"/>
<dbReference type="GeneID" id="45121615"/>
<dbReference type="KEGG" id="bte:BTH_I1883"/>
<dbReference type="HOGENOM" id="CLU_008255_6_0_4"/>
<dbReference type="EvolutionaryTrace" id="Q2SXD6"/>
<dbReference type="Proteomes" id="UP000001930">
    <property type="component" value="Chromosome I"/>
</dbReference>
<dbReference type="GO" id="GO:0005829">
    <property type="term" value="C:cytosol"/>
    <property type="evidence" value="ECO:0007669"/>
    <property type="project" value="TreeGrafter"/>
</dbReference>
<dbReference type="GO" id="GO:0005524">
    <property type="term" value="F:ATP binding"/>
    <property type="evidence" value="ECO:0007669"/>
    <property type="project" value="UniProtKB-UniRule"/>
</dbReference>
<dbReference type="GO" id="GO:0004824">
    <property type="term" value="F:lysine-tRNA ligase activity"/>
    <property type="evidence" value="ECO:0007669"/>
    <property type="project" value="UniProtKB-UniRule"/>
</dbReference>
<dbReference type="GO" id="GO:0000287">
    <property type="term" value="F:magnesium ion binding"/>
    <property type="evidence" value="ECO:0007669"/>
    <property type="project" value="UniProtKB-UniRule"/>
</dbReference>
<dbReference type="GO" id="GO:0000049">
    <property type="term" value="F:tRNA binding"/>
    <property type="evidence" value="ECO:0007669"/>
    <property type="project" value="TreeGrafter"/>
</dbReference>
<dbReference type="GO" id="GO:0006430">
    <property type="term" value="P:lysyl-tRNA aminoacylation"/>
    <property type="evidence" value="ECO:0007669"/>
    <property type="project" value="UniProtKB-UniRule"/>
</dbReference>
<dbReference type="CDD" id="cd00775">
    <property type="entry name" value="LysRS_core"/>
    <property type="match status" value="1"/>
</dbReference>
<dbReference type="CDD" id="cd04322">
    <property type="entry name" value="LysRS_N"/>
    <property type="match status" value="1"/>
</dbReference>
<dbReference type="FunFam" id="2.40.50.140:FF:000024">
    <property type="entry name" value="Lysine--tRNA ligase"/>
    <property type="match status" value="1"/>
</dbReference>
<dbReference type="FunFam" id="3.30.930.10:FF:000001">
    <property type="entry name" value="Lysine--tRNA ligase"/>
    <property type="match status" value="1"/>
</dbReference>
<dbReference type="Gene3D" id="3.30.930.10">
    <property type="entry name" value="Bira Bifunctional Protein, Domain 2"/>
    <property type="match status" value="1"/>
</dbReference>
<dbReference type="Gene3D" id="2.40.50.140">
    <property type="entry name" value="Nucleic acid-binding proteins"/>
    <property type="match status" value="1"/>
</dbReference>
<dbReference type="HAMAP" id="MF_00252">
    <property type="entry name" value="Lys_tRNA_synth_class2"/>
    <property type="match status" value="1"/>
</dbReference>
<dbReference type="InterPro" id="IPR004364">
    <property type="entry name" value="Aa-tRNA-synt_II"/>
</dbReference>
<dbReference type="InterPro" id="IPR006195">
    <property type="entry name" value="aa-tRNA-synth_II"/>
</dbReference>
<dbReference type="InterPro" id="IPR045864">
    <property type="entry name" value="aa-tRNA-synth_II/BPL/LPL"/>
</dbReference>
<dbReference type="InterPro" id="IPR002313">
    <property type="entry name" value="Lys-tRNA-ligase_II"/>
</dbReference>
<dbReference type="InterPro" id="IPR044136">
    <property type="entry name" value="Lys-tRNA-ligase_II_N"/>
</dbReference>
<dbReference type="InterPro" id="IPR018149">
    <property type="entry name" value="Lys-tRNA-synth_II_C"/>
</dbReference>
<dbReference type="InterPro" id="IPR012340">
    <property type="entry name" value="NA-bd_OB-fold"/>
</dbReference>
<dbReference type="InterPro" id="IPR004365">
    <property type="entry name" value="NA-bd_OB_tRNA"/>
</dbReference>
<dbReference type="NCBIfam" id="TIGR00499">
    <property type="entry name" value="lysS_bact"/>
    <property type="match status" value="1"/>
</dbReference>
<dbReference type="NCBIfam" id="NF001756">
    <property type="entry name" value="PRK00484.1"/>
    <property type="match status" value="1"/>
</dbReference>
<dbReference type="PANTHER" id="PTHR42918:SF15">
    <property type="entry name" value="LYSINE--TRNA LIGASE, CHLOROPLASTIC_MITOCHONDRIAL"/>
    <property type="match status" value="1"/>
</dbReference>
<dbReference type="PANTHER" id="PTHR42918">
    <property type="entry name" value="LYSYL-TRNA SYNTHETASE"/>
    <property type="match status" value="1"/>
</dbReference>
<dbReference type="Pfam" id="PF00152">
    <property type="entry name" value="tRNA-synt_2"/>
    <property type="match status" value="1"/>
</dbReference>
<dbReference type="Pfam" id="PF01336">
    <property type="entry name" value="tRNA_anti-codon"/>
    <property type="match status" value="1"/>
</dbReference>
<dbReference type="PRINTS" id="PR00982">
    <property type="entry name" value="TRNASYNTHLYS"/>
</dbReference>
<dbReference type="SUPFAM" id="SSF55681">
    <property type="entry name" value="Class II aaRS and biotin synthetases"/>
    <property type="match status" value="1"/>
</dbReference>
<dbReference type="SUPFAM" id="SSF50249">
    <property type="entry name" value="Nucleic acid-binding proteins"/>
    <property type="match status" value="1"/>
</dbReference>
<dbReference type="PROSITE" id="PS50862">
    <property type="entry name" value="AA_TRNA_LIGASE_II"/>
    <property type="match status" value="1"/>
</dbReference>
<proteinExistence type="evidence at protein level"/>